<gene>
    <name evidence="1" type="primary">nnrE</name>
    <name type="ordered locus">OEOE_0156</name>
</gene>
<accession>Q04HC3</accession>
<name>NNRE_OENOB</name>
<proteinExistence type="inferred from homology"/>
<feature type="chain" id="PRO_0000416371" description="NAD(P)H-hydrate epimerase">
    <location>
        <begin position="1"/>
        <end position="210"/>
    </location>
</feature>
<feature type="domain" description="YjeF N-terminal" evidence="1">
    <location>
        <begin position="11"/>
        <end position="210"/>
    </location>
</feature>
<feature type="binding site" evidence="1">
    <location>
        <begin position="60"/>
        <end position="64"/>
    </location>
    <ligand>
        <name>(6S)-NADPHX</name>
        <dbReference type="ChEBI" id="CHEBI:64076"/>
    </ligand>
</feature>
<feature type="binding site" evidence="1">
    <location>
        <position position="61"/>
    </location>
    <ligand>
        <name>K(+)</name>
        <dbReference type="ChEBI" id="CHEBI:29103"/>
    </ligand>
</feature>
<feature type="binding site" evidence="1">
    <location>
        <position position="123"/>
    </location>
    <ligand>
        <name>K(+)</name>
        <dbReference type="ChEBI" id="CHEBI:29103"/>
    </ligand>
</feature>
<feature type="binding site" evidence="1">
    <location>
        <begin position="127"/>
        <end position="133"/>
    </location>
    <ligand>
        <name>(6S)-NADPHX</name>
        <dbReference type="ChEBI" id="CHEBI:64076"/>
    </ligand>
</feature>
<feature type="binding site" evidence="1">
    <location>
        <position position="156"/>
    </location>
    <ligand>
        <name>(6S)-NADPHX</name>
        <dbReference type="ChEBI" id="CHEBI:64076"/>
    </ligand>
</feature>
<feature type="binding site" evidence="1">
    <location>
        <position position="159"/>
    </location>
    <ligand>
        <name>K(+)</name>
        <dbReference type="ChEBI" id="CHEBI:29103"/>
    </ligand>
</feature>
<sequence>MTTIYISSKQAHNFDDYTINKIGVPSSVLMERAALAVCQRLLESRNFNLKKVLVVAGIGNNGGDGIAVARMLYLKQVPVKIYLLGDREKISKDSRIQLKIAENYGVPFVSNIDDLSSYTTIVDAVFGVGLSRDVTGEIAGIVDFINNSPASVMAVDMPTGLNADNGNIMGTAVKAAETVTMSYNKLGLISETGRKFAGVVTVADIGIYEP</sequence>
<reference key="1">
    <citation type="journal article" date="2006" name="Proc. Natl. Acad. Sci. U.S.A.">
        <title>Comparative genomics of the lactic acid bacteria.</title>
        <authorList>
            <person name="Makarova K.S."/>
            <person name="Slesarev A."/>
            <person name="Wolf Y.I."/>
            <person name="Sorokin A."/>
            <person name="Mirkin B."/>
            <person name="Koonin E.V."/>
            <person name="Pavlov A."/>
            <person name="Pavlova N."/>
            <person name="Karamychev V."/>
            <person name="Polouchine N."/>
            <person name="Shakhova V."/>
            <person name="Grigoriev I."/>
            <person name="Lou Y."/>
            <person name="Rohksar D."/>
            <person name="Lucas S."/>
            <person name="Huang K."/>
            <person name="Goodstein D.M."/>
            <person name="Hawkins T."/>
            <person name="Plengvidhya V."/>
            <person name="Welker D."/>
            <person name="Hughes J."/>
            <person name="Goh Y."/>
            <person name="Benson A."/>
            <person name="Baldwin K."/>
            <person name="Lee J.-H."/>
            <person name="Diaz-Muniz I."/>
            <person name="Dosti B."/>
            <person name="Smeianov V."/>
            <person name="Wechter W."/>
            <person name="Barabote R."/>
            <person name="Lorca G."/>
            <person name="Altermann E."/>
            <person name="Barrangou R."/>
            <person name="Ganesan B."/>
            <person name="Xie Y."/>
            <person name="Rawsthorne H."/>
            <person name="Tamir D."/>
            <person name="Parker C."/>
            <person name="Breidt F."/>
            <person name="Broadbent J.R."/>
            <person name="Hutkins R."/>
            <person name="O'Sullivan D."/>
            <person name="Steele J."/>
            <person name="Unlu G."/>
            <person name="Saier M.H. Jr."/>
            <person name="Klaenhammer T."/>
            <person name="Richardson P."/>
            <person name="Kozyavkin S."/>
            <person name="Weimer B.C."/>
            <person name="Mills D.A."/>
        </authorList>
    </citation>
    <scope>NUCLEOTIDE SEQUENCE [LARGE SCALE GENOMIC DNA]</scope>
    <source>
        <strain>ATCC BAA-331 / PSU-1</strain>
    </source>
</reference>
<comment type="function">
    <text evidence="1">Catalyzes the epimerization of the S- and R-forms of NAD(P)HX, a damaged form of NAD(P)H that is a result of enzymatic or heat-dependent hydration. This is a prerequisite for the S-specific NAD(P)H-hydrate dehydratase to allow the repair of both epimers of NAD(P)HX.</text>
</comment>
<comment type="catalytic activity">
    <reaction evidence="1">
        <text>(6R)-NADHX = (6S)-NADHX</text>
        <dbReference type="Rhea" id="RHEA:32215"/>
        <dbReference type="ChEBI" id="CHEBI:64074"/>
        <dbReference type="ChEBI" id="CHEBI:64075"/>
        <dbReference type="EC" id="5.1.99.6"/>
    </reaction>
</comment>
<comment type="catalytic activity">
    <reaction evidence="1">
        <text>(6R)-NADPHX = (6S)-NADPHX</text>
        <dbReference type="Rhea" id="RHEA:32227"/>
        <dbReference type="ChEBI" id="CHEBI:64076"/>
        <dbReference type="ChEBI" id="CHEBI:64077"/>
        <dbReference type="EC" id="5.1.99.6"/>
    </reaction>
</comment>
<comment type="cofactor">
    <cofactor evidence="1">
        <name>K(+)</name>
        <dbReference type="ChEBI" id="CHEBI:29103"/>
    </cofactor>
    <text evidence="1">Binds 1 potassium ion per subunit.</text>
</comment>
<comment type="similarity">
    <text evidence="1">Belongs to the NnrE/AIBP family.</text>
</comment>
<dbReference type="EC" id="5.1.99.6" evidence="1"/>
<dbReference type="EMBL" id="CP000411">
    <property type="protein sequence ID" value="ABJ56149.1"/>
    <property type="molecule type" value="Genomic_DNA"/>
</dbReference>
<dbReference type="RefSeq" id="WP_002818071.1">
    <property type="nucleotide sequence ID" value="NC_008528.1"/>
</dbReference>
<dbReference type="SMR" id="Q04HC3"/>
<dbReference type="STRING" id="203123.OEOE_0156"/>
<dbReference type="KEGG" id="ooe:OEOE_0156"/>
<dbReference type="eggNOG" id="COG0062">
    <property type="taxonomic scope" value="Bacteria"/>
</dbReference>
<dbReference type="HOGENOM" id="CLU_024853_0_1_9"/>
<dbReference type="Proteomes" id="UP000000774">
    <property type="component" value="Chromosome"/>
</dbReference>
<dbReference type="GO" id="GO:0046872">
    <property type="term" value="F:metal ion binding"/>
    <property type="evidence" value="ECO:0007669"/>
    <property type="project" value="UniProtKB-KW"/>
</dbReference>
<dbReference type="GO" id="GO:0052856">
    <property type="term" value="F:NAD(P)HX epimerase activity"/>
    <property type="evidence" value="ECO:0007669"/>
    <property type="project" value="UniProtKB-UniRule"/>
</dbReference>
<dbReference type="GO" id="GO:0000166">
    <property type="term" value="F:nucleotide binding"/>
    <property type="evidence" value="ECO:0007669"/>
    <property type="project" value="UniProtKB-KW"/>
</dbReference>
<dbReference type="Gene3D" id="3.40.50.10260">
    <property type="entry name" value="YjeF N-terminal domain"/>
    <property type="match status" value="1"/>
</dbReference>
<dbReference type="HAMAP" id="MF_01966">
    <property type="entry name" value="NADHX_epimerase"/>
    <property type="match status" value="1"/>
</dbReference>
<dbReference type="InterPro" id="IPR004443">
    <property type="entry name" value="YjeF_N_dom"/>
</dbReference>
<dbReference type="InterPro" id="IPR036652">
    <property type="entry name" value="YjeF_N_dom_sf"/>
</dbReference>
<dbReference type="InterPro" id="IPR032976">
    <property type="entry name" value="YJEFN_prot_NAXE-like"/>
</dbReference>
<dbReference type="NCBIfam" id="TIGR00197">
    <property type="entry name" value="yjeF_nterm"/>
    <property type="match status" value="1"/>
</dbReference>
<dbReference type="PANTHER" id="PTHR13232">
    <property type="entry name" value="NAD(P)H-HYDRATE EPIMERASE"/>
    <property type="match status" value="1"/>
</dbReference>
<dbReference type="PANTHER" id="PTHR13232:SF10">
    <property type="entry name" value="NAD(P)H-HYDRATE EPIMERASE"/>
    <property type="match status" value="1"/>
</dbReference>
<dbReference type="Pfam" id="PF03853">
    <property type="entry name" value="YjeF_N"/>
    <property type="match status" value="1"/>
</dbReference>
<dbReference type="SUPFAM" id="SSF64153">
    <property type="entry name" value="YjeF N-terminal domain-like"/>
    <property type="match status" value="1"/>
</dbReference>
<dbReference type="PROSITE" id="PS51385">
    <property type="entry name" value="YJEF_N"/>
    <property type="match status" value="1"/>
</dbReference>
<protein>
    <recommendedName>
        <fullName evidence="1">NAD(P)H-hydrate epimerase</fullName>
        <ecNumber evidence="1">5.1.99.6</ecNumber>
    </recommendedName>
    <alternativeName>
        <fullName evidence="1">NAD(P)HX epimerase</fullName>
    </alternativeName>
</protein>
<keyword id="KW-0413">Isomerase</keyword>
<keyword id="KW-0479">Metal-binding</keyword>
<keyword id="KW-0520">NAD</keyword>
<keyword id="KW-0521">NADP</keyword>
<keyword id="KW-0547">Nucleotide-binding</keyword>
<keyword id="KW-0630">Potassium</keyword>
<keyword id="KW-1185">Reference proteome</keyword>
<evidence type="ECO:0000255" key="1">
    <source>
        <dbReference type="HAMAP-Rule" id="MF_01966"/>
    </source>
</evidence>
<organism>
    <name type="scientific">Oenococcus oeni (strain ATCC BAA-331 / PSU-1)</name>
    <dbReference type="NCBI Taxonomy" id="203123"/>
    <lineage>
        <taxon>Bacteria</taxon>
        <taxon>Bacillati</taxon>
        <taxon>Bacillota</taxon>
        <taxon>Bacilli</taxon>
        <taxon>Lactobacillales</taxon>
        <taxon>Lactobacillaceae</taxon>
        <taxon>Oenococcus</taxon>
    </lineage>
</organism>